<sequence length="129" mass="14321">MAKVYATGRRKTSIAKVWLESGNGQLTINGQTLDAWLGGHESIKKRVMQPLNVAKQETSVNIIVKTLGGGYSAQADAARHGISRALVAFDEQFRTILKPYGLLTRDSRSVERKKFGKKKARKSSQFSKR</sequence>
<comment type="similarity">
    <text evidence="1">Belongs to the universal ribosomal protein uS9 family.</text>
</comment>
<keyword id="KW-1185">Reference proteome</keyword>
<keyword id="KW-0687">Ribonucleoprotein</keyword>
<keyword id="KW-0689">Ribosomal protein</keyword>
<accession>A8ER06</accession>
<reference key="1">
    <citation type="journal article" date="2007" name="PLoS ONE">
        <title>The complete genome sequence and analysis of the Epsilonproteobacterium Arcobacter butzleri.</title>
        <authorList>
            <person name="Miller W.G."/>
            <person name="Parker C.T."/>
            <person name="Rubenfield M."/>
            <person name="Mendz G.L."/>
            <person name="Woesten M.M.S.M."/>
            <person name="Ussery D.W."/>
            <person name="Stolz J.F."/>
            <person name="Binnewies T.T."/>
            <person name="Hallin P.F."/>
            <person name="Wang G."/>
            <person name="Malek J.A."/>
            <person name="Rogosin A."/>
            <person name="Stanker L.H."/>
            <person name="Mandrell R.E."/>
        </authorList>
    </citation>
    <scope>NUCLEOTIDE SEQUENCE [LARGE SCALE GENOMIC DNA]</scope>
    <source>
        <strain>RM4018</strain>
    </source>
</reference>
<name>RS9_ALIB4</name>
<evidence type="ECO:0000255" key="1">
    <source>
        <dbReference type="HAMAP-Rule" id="MF_00532"/>
    </source>
</evidence>
<evidence type="ECO:0000305" key="2"/>
<dbReference type="EMBL" id="CP000361">
    <property type="protein sequence ID" value="ABV66380.1"/>
    <property type="molecule type" value="Genomic_DNA"/>
</dbReference>
<dbReference type="RefSeq" id="WP_004510141.1">
    <property type="nucleotide sequence ID" value="NC_009850.1"/>
</dbReference>
<dbReference type="SMR" id="A8ER06"/>
<dbReference type="STRING" id="367737.Abu_0095"/>
<dbReference type="GeneID" id="24305025"/>
<dbReference type="KEGG" id="abu:Abu_0095"/>
<dbReference type="eggNOG" id="COG0103">
    <property type="taxonomic scope" value="Bacteria"/>
</dbReference>
<dbReference type="HOGENOM" id="CLU_046483_2_1_7"/>
<dbReference type="Proteomes" id="UP000001136">
    <property type="component" value="Chromosome"/>
</dbReference>
<dbReference type="GO" id="GO:0022627">
    <property type="term" value="C:cytosolic small ribosomal subunit"/>
    <property type="evidence" value="ECO:0007669"/>
    <property type="project" value="TreeGrafter"/>
</dbReference>
<dbReference type="GO" id="GO:0003723">
    <property type="term" value="F:RNA binding"/>
    <property type="evidence" value="ECO:0007669"/>
    <property type="project" value="TreeGrafter"/>
</dbReference>
<dbReference type="GO" id="GO:0003735">
    <property type="term" value="F:structural constituent of ribosome"/>
    <property type="evidence" value="ECO:0007669"/>
    <property type="project" value="InterPro"/>
</dbReference>
<dbReference type="GO" id="GO:0006412">
    <property type="term" value="P:translation"/>
    <property type="evidence" value="ECO:0007669"/>
    <property type="project" value="UniProtKB-UniRule"/>
</dbReference>
<dbReference type="FunFam" id="3.30.230.10:FF:000001">
    <property type="entry name" value="30S ribosomal protein S9"/>
    <property type="match status" value="1"/>
</dbReference>
<dbReference type="Gene3D" id="3.30.230.10">
    <property type="match status" value="1"/>
</dbReference>
<dbReference type="HAMAP" id="MF_00532_B">
    <property type="entry name" value="Ribosomal_uS9_B"/>
    <property type="match status" value="1"/>
</dbReference>
<dbReference type="InterPro" id="IPR020568">
    <property type="entry name" value="Ribosomal_Su5_D2-typ_SF"/>
</dbReference>
<dbReference type="InterPro" id="IPR000754">
    <property type="entry name" value="Ribosomal_uS9"/>
</dbReference>
<dbReference type="InterPro" id="IPR023035">
    <property type="entry name" value="Ribosomal_uS9_bac/plastid"/>
</dbReference>
<dbReference type="InterPro" id="IPR020574">
    <property type="entry name" value="Ribosomal_uS9_CS"/>
</dbReference>
<dbReference type="InterPro" id="IPR014721">
    <property type="entry name" value="Ribsml_uS5_D2-typ_fold_subgr"/>
</dbReference>
<dbReference type="NCBIfam" id="NF001099">
    <property type="entry name" value="PRK00132.1"/>
    <property type="match status" value="1"/>
</dbReference>
<dbReference type="PANTHER" id="PTHR21569">
    <property type="entry name" value="RIBOSOMAL PROTEIN S9"/>
    <property type="match status" value="1"/>
</dbReference>
<dbReference type="PANTHER" id="PTHR21569:SF1">
    <property type="entry name" value="SMALL RIBOSOMAL SUBUNIT PROTEIN US9M"/>
    <property type="match status" value="1"/>
</dbReference>
<dbReference type="Pfam" id="PF00380">
    <property type="entry name" value="Ribosomal_S9"/>
    <property type="match status" value="1"/>
</dbReference>
<dbReference type="SUPFAM" id="SSF54211">
    <property type="entry name" value="Ribosomal protein S5 domain 2-like"/>
    <property type="match status" value="1"/>
</dbReference>
<dbReference type="PROSITE" id="PS00360">
    <property type="entry name" value="RIBOSOMAL_S9"/>
    <property type="match status" value="1"/>
</dbReference>
<feature type="chain" id="PRO_1000128072" description="Small ribosomal subunit protein uS9">
    <location>
        <begin position="1"/>
        <end position="129"/>
    </location>
</feature>
<protein>
    <recommendedName>
        <fullName evidence="1">Small ribosomal subunit protein uS9</fullName>
    </recommendedName>
    <alternativeName>
        <fullName evidence="2">30S ribosomal protein S9</fullName>
    </alternativeName>
</protein>
<proteinExistence type="inferred from homology"/>
<gene>
    <name evidence="1" type="primary">rpsI</name>
    <name type="ordered locus">Abu_0095</name>
</gene>
<organism>
    <name type="scientific">Aliarcobacter butzleri (strain RM4018)</name>
    <name type="common">Arcobacter butzleri</name>
    <dbReference type="NCBI Taxonomy" id="367737"/>
    <lineage>
        <taxon>Bacteria</taxon>
        <taxon>Pseudomonadati</taxon>
        <taxon>Campylobacterota</taxon>
        <taxon>Epsilonproteobacteria</taxon>
        <taxon>Campylobacterales</taxon>
        <taxon>Arcobacteraceae</taxon>
        <taxon>Aliarcobacter</taxon>
    </lineage>
</organism>